<proteinExistence type="inferred from homology"/>
<accession>P65205</accession>
<accession>Q99W79</accession>
<evidence type="ECO:0000255" key="1">
    <source>
        <dbReference type="HAMAP-Rule" id="MF_00602"/>
    </source>
</evidence>
<gene>
    <name evidence="1" type="primary">mcsB</name>
    <name type="ordered locus">SAV0524</name>
</gene>
<keyword id="KW-0067">ATP-binding</keyword>
<keyword id="KW-0418">Kinase</keyword>
<keyword id="KW-0547">Nucleotide-binding</keyword>
<keyword id="KW-0808">Transferase</keyword>
<sequence length="335" mass="38596">MTHNIHDNISQWMKSNEETPIVMSSRIRLARNLENHVHPLMYATENDGFRVINEVQDALPNFELMRLDQMDQQSKMKMVAKHLISPELIKQPAAAVLVNDDESLSVMINEEDHIRIQAMGTDTTLQALYNQASSIDDELDRSLDISYDEQLGYLTTCPTNIGTGMRASVMLHLPGLSIMKRMTRIAQTINRFGYTIRGIYGEGSQVYGHTYQVSNQLTLGKSELEIIETLTEVVNQIIHDEKQIRQKLDTYNQLETQDRVFRSLGILQNCRMITMEEASYRLSEVKLGIDLNYIELQNFKFNELMVAIQSPFLLDEEDDKSVKEKRADILREHIK</sequence>
<protein>
    <recommendedName>
        <fullName evidence="1">Protein-arginine kinase</fullName>
        <ecNumber evidence="1">2.7.14.1</ecNumber>
    </recommendedName>
</protein>
<name>MCSB_STAAM</name>
<comment type="function">
    <text evidence="1">Catalyzes the specific phosphorylation of arginine residues in proteins.</text>
</comment>
<comment type="catalytic activity">
    <reaction evidence="1">
        <text>L-arginyl-[protein] + ATP = N(omega)-phospho-L-arginyl-[protein] + ADP + H(+)</text>
        <dbReference type="Rhea" id="RHEA:43384"/>
        <dbReference type="Rhea" id="RHEA-COMP:10532"/>
        <dbReference type="Rhea" id="RHEA-COMP:10533"/>
        <dbReference type="ChEBI" id="CHEBI:15378"/>
        <dbReference type="ChEBI" id="CHEBI:29965"/>
        <dbReference type="ChEBI" id="CHEBI:30616"/>
        <dbReference type="ChEBI" id="CHEBI:83226"/>
        <dbReference type="ChEBI" id="CHEBI:456216"/>
        <dbReference type="EC" id="2.7.14.1"/>
    </reaction>
</comment>
<comment type="similarity">
    <text evidence="1">Belongs to the ATP:guanido phosphotransferase family.</text>
</comment>
<reference key="1">
    <citation type="journal article" date="2001" name="Lancet">
        <title>Whole genome sequencing of meticillin-resistant Staphylococcus aureus.</title>
        <authorList>
            <person name="Kuroda M."/>
            <person name="Ohta T."/>
            <person name="Uchiyama I."/>
            <person name="Baba T."/>
            <person name="Yuzawa H."/>
            <person name="Kobayashi I."/>
            <person name="Cui L."/>
            <person name="Oguchi A."/>
            <person name="Aoki K."/>
            <person name="Nagai Y."/>
            <person name="Lian J.-Q."/>
            <person name="Ito T."/>
            <person name="Kanamori M."/>
            <person name="Matsumaru H."/>
            <person name="Maruyama A."/>
            <person name="Murakami H."/>
            <person name="Hosoyama A."/>
            <person name="Mizutani-Ui Y."/>
            <person name="Takahashi N.K."/>
            <person name="Sawano T."/>
            <person name="Inoue R."/>
            <person name="Kaito C."/>
            <person name="Sekimizu K."/>
            <person name="Hirakawa H."/>
            <person name="Kuhara S."/>
            <person name="Goto S."/>
            <person name="Yabuzaki J."/>
            <person name="Kanehisa M."/>
            <person name="Yamashita A."/>
            <person name="Oshima K."/>
            <person name="Furuya K."/>
            <person name="Yoshino C."/>
            <person name="Shiba T."/>
            <person name="Hattori M."/>
            <person name="Ogasawara N."/>
            <person name="Hayashi H."/>
            <person name="Hiramatsu K."/>
        </authorList>
    </citation>
    <scope>NUCLEOTIDE SEQUENCE [LARGE SCALE GENOMIC DNA]</scope>
    <source>
        <strain>Mu50 / ATCC 700699</strain>
    </source>
</reference>
<dbReference type="EC" id="2.7.14.1" evidence="1"/>
<dbReference type="EMBL" id="BA000017">
    <property type="protein sequence ID" value="BAB56686.1"/>
    <property type="molecule type" value="Genomic_DNA"/>
</dbReference>
<dbReference type="RefSeq" id="WP_000149502.1">
    <property type="nucleotide sequence ID" value="NC_002758.2"/>
</dbReference>
<dbReference type="SMR" id="P65205"/>
<dbReference type="KEGG" id="sav:SAV0524"/>
<dbReference type="HOGENOM" id="CLU_066591_1_0_9"/>
<dbReference type="PhylomeDB" id="P65205"/>
<dbReference type="Proteomes" id="UP000002481">
    <property type="component" value="Chromosome"/>
</dbReference>
<dbReference type="GO" id="GO:0005615">
    <property type="term" value="C:extracellular space"/>
    <property type="evidence" value="ECO:0007669"/>
    <property type="project" value="TreeGrafter"/>
</dbReference>
<dbReference type="GO" id="GO:0005524">
    <property type="term" value="F:ATP binding"/>
    <property type="evidence" value="ECO:0007669"/>
    <property type="project" value="UniProtKB-KW"/>
</dbReference>
<dbReference type="GO" id="GO:0004111">
    <property type="term" value="F:creatine kinase activity"/>
    <property type="evidence" value="ECO:0007669"/>
    <property type="project" value="InterPro"/>
</dbReference>
<dbReference type="GO" id="GO:0004672">
    <property type="term" value="F:protein kinase activity"/>
    <property type="evidence" value="ECO:0007669"/>
    <property type="project" value="UniProtKB-UniRule"/>
</dbReference>
<dbReference type="GO" id="GO:0046314">
    <property type="term" value="P:phosphocreatine biosynthetic process"/>
    <property type="evidence" value="ECO:0007669"/>
    <property type="project" value="InterPro"/>
</dbReference>
<dbReference type="CDD" id="cd07930">
    <property type="entry name" value="bacterial_phosphagen_kinase"/>
    <property type="match status" value="1"/>
</dbReference>
<dbReference type="FunFam" id="3.30.590.10:FF:000007">
    <property type="entry name" value="Protein-arginine kinase"/>
    <property type="match status" value="1"/>
</dbReference>
<dbReference type="Gene3D" id="3.30.590.10">
    <property type="entry name" value="Glutamine synthetase/guanido kinase, catalytic domain"/>
    <property type="match status" value="1"/>
</dbReference>
<dbReference type="HAMAP" id="MF_00602">
    <property type="entry name" value="Prot_Arg_kinase"/>
    <property type="match status" value="1"/>
</dbReference>
<dbReference type="InterPro" id="IPR023660">
    <property type="entry name" value="Arg_Kinase"/>
</dbReference>
<dbReference type="InterPro" id="IPR000749">
    <property type="entry name" value="ATP-guanido_PTrfase"/>
</dbReference>
<dbReference type="InterPro" id="IPR022415">
    <property type="entry name" value="ATP-guanido_PTrfase_AS"/>
</dbReference>
<dbReference type="InterPro" id="IPR022414">
    <property type="entry name" value="ATP-guanido_PTrfase_cat"/>
</dbReference>
<dbReference type="InterPro" id="IPR014746">
    <property type="entry name" value="Gln_synth/guanido_kin_cat_dom"/>
</dbReference>
<dbReference type="NCBIfam" id="NF002193">
    <property type="entry name" value="PRK01059.1-3"/>
    <property type="match status" value="1"/>
</dbReference>
<dbReference type="PANTHER" id="PTHR11547:SF38">
    <property type="entry name" value="ARGININE KINASE 1-RELATED"/>
    <property type="match status" value="1"/>
</dbReference>
<dbReference type="PANTHER" id="PTHR11547">
    <property type="entry name" value="ARGININE OR CREATINE KINASE"/>
    <property type="match status" value="1"/>
</dbReference>
<dbReference type="Pfam" id="PF00217">
    <property type="entry name" value="ATP-gua_Ptrans"/>
    <property type="match status" value="1"/>
</dbReference>
<dbReference type="SUPFAM" id="SSF55931">
    <property type="entry name" value="Glutamine synthetase/guanido kinase"/>
    <property type="match status" value="1"/>
</dbReference>
<dbReference type="PROSITE" id="PS00112">
    <property type="entry name" value="PHOSPHAGEN_KINASE"/>
    <property type="match status" value="1"/>
</dbReference>
<dbReference type="PROSITE" id="PS51510">
    <property type="entry name" value="PHOSPHAGEN_KINASE_C"/>
    <property type="match status" value="1"/>
</dbReference>
<organism>
    <name type="scientific">Staphylococcus aureus (strain Mu50 / ATCC 700699)</name>
    <dbReference type="NCBI Taxonomy" id="158878"/>
    <lineage>
        <taxon>Bacteria</taxon>
        <taxon>Bacillati</taxon>
        <taxon>Bacillota</taxon>
        <taxon>Bacilli</taxon>
        <taxon>Bacillales</taxon>
        <taxon>Staphylococcaceae</taxon>
        <taxon>Staphylococcus</taxon>
    </lineage>
</organism>
<feature type="chain" id="PRO_0000212029" description="Protein-arginine kinase">
    <location>
        <begin position="1"/>
        <end position="335"/>
    </location>
</feature>
<feature type="domain" description="Phosphagen kinase C-terminal" evidence="1">
    <location>
        <begin position="21"/>
        <end position="244"/>
    </location>
</feature>
<feature type="binding site" evidence="1">
    <location>
        <begin position="24"/>
        <end position="28"/>
    </location>
    <ligand>
        <name>ATP</name>
        <dbReference type="ChEBI" id="CHEBI:30616"/>
    </ligand>
</feature>
<feature type="binding site" evidence="1">
    <location>
        <position position="82"/>
    </location>
    <ligand>
        <name>ATP</name>
        <dbReference type="ChEBI" id="CHEBI:30616"/>
    </ligand>
</feature>
<feature type="binding site" evidence="1">
    <location>
        <position position="115"/>
    </location>
    <ligand>
        <name>ATP</name>
        <dbReference type="ChEBI" id="CHEBI:30616"/>
    </ligand>
</feature>
<feature type="binding site" evidence="1">
    <location>
        <begin position="166"/>
        <end position="170"/>
    </location>
    <ligand>
        <name>ATP</name>
        <dbReference type="ChEBI" id="CHEBI:30616"/>
    </ligand>
</feature>
<feature type="binding site" evidence="1">
    <location>
        <begin position="197"/>
        <end position="202"/>
    </location>
    <ligand>
        <name>ATP</name>
        <dbReference type="ChEBI" id="CHEBI:30616"/>
    </ligand>
</feature>